<comment type="subcellular location">
    <subcellularLocation>
        <location evidence="3">Secreted</location>
    </subcellularLocation>
</comment>
<comment type="tissue specificity">
    <text evidence="6">Expressed by the venom duct.</text>
</comment>
<comment type="domain">
    <text evidence="5">The cysteine framework is C-C.</text>
</comment>
<comment type="mass spectrometry">
    <molecule>Conopressin-ba1d</molecule>
</comment>
<comment type="similarity">
    <text evidence="5">Belongs to the vasopressin/oxytocin family.</text>
</comment>
<name>CESSD_CONBY</name>
<accession>P0DTJ3</accession>
<keyword id="KW-0027">Amidation</keyword>
<keyword id="KW-1015">Disulfide bond</keyword>
<keyword id="KW-0964">Secreted</keyword>
<keyword id="KW-0732">Signal</keyword>
<keyword id="KW-0800">Toxin</keyword>
<dbReference type="GO" id="GO:0005615">
    <property type="term" value="C:extracellular space"/>
    <property type="evidence" value="ECO:0007669"/>
    <property type="project" value="TreeGrafter"/>
</dbReference>
<dbReference type="GO" id="GO:0030141">
    <property type="term" value="C:secretory granule"/>
    <property type="evidence" value="ECO:0007669"/>
    <property type="project" value="TreeGrafter"/>
</dbReference>
<dbReference type="GO" id="GO:0005185">
    <property type="term" value="F:neurohypophyseal hormone activity"/>
    <property type="evidence" value="ECO:0007669"/>
    <property type="project" value="InterPro"/>
</dbReference>
<dbReference type="GO" id="GO:0090729">
    <property type="term" value="F:toxin activity"/>
    <property type="evidence" value="ECO:0007669"/>
    <property type="project" value="UniProtKB-KW"/>
</dbReference>
<dbReference type="Gene3D" id="2.60.9.10">
    <property type="entry name" value="Neurohypophysial hormone domain"/>
    <property type="match status" value="1"/>
</dbReference>
<dbReference type="InterPro" id="IPR000981">
    <property type="entry name" value="Neurhyp_horm"/>
</dbReference>
<dbReference type="InterPro" id="IPR036387">
    <property type="entry name" value="Neurhyp_horm_dom_sf"/>
</dbReference>
<dbReference type="PANTHER" id="PTHR11681:SF5">
    <property type="entry name" value="ISOTOCIN"/>
    <property type="match status" value="1"/>
</dbReference>
<dbReference type="PANTHER" id="PTHR11681">
    <property type="entry name" value="NEUROPHYSIN"/>
    <property type="match status" value="1"/>
</dbReference>
<dbReference type="Pfam" id="PF00184">
    <property type="entry name" value="Hormone_5"/>
    <property type="match status" value="1"/>
</dbReference>
<dbReference type="SMART" id="SM00003">
    <property type="entry name" value="NH"/>
    <property type="match status" value="1"/>
</dbReference>
<dbReference type="SUPFAM" id="SSF49606">
    <property type="entry name" value="Neurophysin II"/>
    <property type="match status" value="1"/>
</dbReference>
<feature type="signal peptide" evidence="6">
    <location>
        <begin position="1"/>
        <end position="27"/>
    </location>
</feature>
<feature type="peptide" id="PRO_0000454979" description="Conopressin-ba1d" evidence="2 5">
    <location>
        <begin position="28"/>
        <end position="36"/>
    </location>
</feature>
<feature type="peptide" id="PRO_0000454980" description="Conopressin-ba1d" evidence="3">
    <location>
        <begin position="28"/>
        <end position="35"/>
    </location>
</feature>
<feature type="propeptide" id="PRO_0000454981" evidence="2">
    <location>
        <begin position="37"/>
        <end position="44"/>
    </location>
</feature>
<feature type="chain" id="PRO_0000454982" description="Conophysin ba2" evidence="2">
    <location>
        <begin position="45"/>
        <end position="130"/>
    </location>
</feature>
<feature type="propeptide" id="PRO_0000454983" evidence="5">
    <location>
        <begin position="131"/>
        <end position="144"/>
    </location>
</feature>
<feature type="modified residue" description="Aspartic acid 1-amide" evidence="5">
    <location>
        <position position="36"/>
    </location>
</feature>
<feature type="disulfide bond" evidence="2">
    <location>
        <begin position="28"/>
        <end position="33"/>
    </location>
</feature>
<feature type="disulfide bond" evidence="1">
    <location>
        <begin position="50"/>
        <end position="90"/>
    </location>
</feature>
<feature type="disulfide bond" evidence="1">
    <location>
        <begin position="53"/>
        <end position="64"/>
    </location>
</feature>
<feature type="disulfide bond" evidence="1">
    <location>
        <begin position="58"/>
        <end position="80"/>
    </location>
</feature>
<feature type="disulfide bond" evidence="1">
    <location>
        <begin position="65"/>
        <end position="70"/>
    </location>
</feature>
<feature type="disulfide bond" evidence="1">
    <location>
        <begin position="97"/>
        <end position="117"/>
    </location>
</feature>
<feature type="disulfide bond" evidence="1">
    <location>
        <begin position="109"/>
        <end position="129"/>
    </location>
</feature>
<feature type="disulfide bond" evidence="1">
    <location>
        <begin position="118"/>
        <end position="123"/>
    </location>
</feature>
<protein>
    <recommendedName>
        <fullName evidence="4">Conopressin-conophysin</fullName>
    </recommendedName>
    <component>
        <recommendedName>
            <fullName evidence="4">Conopressin-ba1d</fullName>
        </recommendedName>
        <alternativeName>
            <fullName evidence="5">Conopressin ba2</fullName>
        </alternativeName>
    </component>
    <component>
        <recommendedName>
            <fullName evidence="5">Conophysin ba2</fullName>
        </recommendedName>
    </component>
</protein>
<reference key="1">
    <citation type="journal article" date="2021" name="Mar. Drugs">
        <title>Diversity of Conopeptides and Conoenzymes from the Venom Duct of the Marine Cone Snail Conus bayani as Determined from Transcriptomic and Proteomic Analyses.</title>
        <authorList>
            <person name="Rajaian Pushpabai R."/>
            <person name="Wilson Alphonse C.R."/>
            <person name="Mani R."/>
            <person name="Arun Apte D."/>
            <person name="Franklin J.B."/>
        </authorList>
    </citation>
    <scope>NUCLEOTIDE SEQUENCE [MRNA]</scope>
    <scope>MASS SPECTROMETRY</scope>
    <scope>SUBCELLULAR LOCATION</scope>
    <source>
        <tissue>Venom</tissue>
        <tissue>Venom duct</tissue>
    </source>
</reference>
<proteinExistence type="evidence at protein level"/>
<sequence>MTRSALQMGRLTLVLCLLLQLVLVTQACFLGNCLNDGERDVDGREAMRPCKYCSFGQCVGPQICCGDRGCEMGSEEANKCREEDEDSTPCQVFGWPCTLNNPGNTNGKCVANCIGICCVTDTCVVSSECQKESKSGIRVGCQRS</sequence>
<evidence type="ECO:0000250" key="1">
    <source>
        <dbReference type="UniProtKB" id="P01175"/>
    </source>
</evidence>
<evidence type="ECO:0000250" key="2">
    <source>
        <dbReference type="UniProtKB" id="P05486"/>
    </source>
</evidence>
<evidence type="ECO:0000269" key="3">
    <source>
    </source>
</evidence>
<evidence type="ECO:0000303" key="4">
    <source>
    </source>
</evidence>
<evidence type="ECO:0000305" key="5"/>
<evidence type="ECO:0000305" key="6">
    <source>
    </source>
</evidence>
<organism>
    <name type="scientific">Conus bayani</name>
    <name type="common">Bayan's cone</name>
    <name type="synonym">Stellaconus bayani</name>
    <dbReference type="NCBI Taxonomy" id="2070216"/>
    <lineage>
        <taxon>Eukaryota</taxon>
        <taxon>Metazoa</taxon>
        <taxon>Spiralia</taxon>
        <taxon>Lophotrochozoa</taxon>
        <taxon>Mollusca</taxon>
        <taxon>Gastropoda</taxon>
        <taxon>Caenogastropoda</taxon>
        <taxon>Neogastropoda</taxon>
        <taxon>Conoidea</taxon>
        <taxon>Conidae</taxon>
        <taxon>Conus</taxon>
        <taxon>Splinoconus</taxon>
    </lineage>
</organism>